<comment type="subunit">
    <text evidence="4">Component of the PAQosome complex which is responsible for the biogenesis of several protein complexes and which consists of R2TP complex members RUVBL1, RUVBL2, RPAP3 and PIH1D1, URI complex members PFDN2, PFDN6, PDRG1, UXT and URI1 as well as ASDURF, POLR2E and DNAAF10/WDR92.</text>
</comment>
<comment type="subcellular location">
    <subcellularLocation>
        <location evidence="3">Cytoplasm</location>
    </subcellularLocation>
</comment>
<comment type="alternative products">
    <event type="alternative initiation"/>
    <isoform>
        <id>L0R819-1</id>
        <name>2</name>
        <name evidence="5">uORF</name>
        <sequence type="displayed"/>
    </isoform>
    <isoform>
        <id>Q9NWL6-1</id>
        <name>1</name>
        <sequence type="external"/>
    </isoform>
</comment>
<comment type="miscellaneous">
    <molecule>Isoform 2</molecule>
    <text evidence="5 6 7">Product of the upstream open reading frame of this bicistronic gene.</text>
</comment>
<proteinExistence type="evidence at protein level"/>
<name>ASURF_HUMAN</name>
<keyword id="KW-0024">Alternative initiation</keyword>
<keyword id="KW-0175">Coiled coil</keyword>
<keyword id="KW-0963">Cytoplasm</keyword>
<keyword id="KW-1267">Proteomics identification</keyword>
<keyword id="KW-1185">Reference proteome</keyword>
<accession>L0R819</accession>
<sequence length="96" mass="11250">MPSRGTRPEDSSVLIPTDNSTPHKEDLSSKIKEQKIVVDELSNLKKNRKVYRQQQNSNIFFLADRTEMLSESKNILDELKKEYQEIENLDKTKIKK</sequence>
<evidence type="ECO:0000255" key="1"/>
<evidence type="ECO:0000256" key="2">
    <source>
        <dbReference type="SAM" id="MobiDB-lite"/>
    </source>
</evidence>
<evidence type="ECO:0000269" key="3">
    <source>
    </source>
</evidence>
<evidence type="ECO:0000269" key="4">
    <source>
    </source>
</evidence>
<evidence type="ECO:0000303" key="5">
    <source>
    </source>
</evidence>
<evidence type="ECO:0000303" key="6">
    <source>
    </source>
</evidence>
<evidence type="ECO:0000303" key="7">
    <source>
    </source>
</evidence>
<evidence type="ECO:0000312" key="8">
    <source>
        <dbReference type="EMBL" id="CCO13681.1"/>
    </source>
</evidence>
<evidence type="ECO:0000312" key="9">
    <source>
        <dbReference type="HGNC" id="HGNC:53619"/>
    </source>
</evidence>
<organism evidence="8">
    <name type="scientific">Homo sapiens</name>
    <name type="common">Human</name>
    <dbReference type="NCBI Taxonomy" id="9606"/>
    <lineage>
        <taxon>Eukaryota</taxon>
        <taxon>Metazoa</taxon>
        <taxon>Chordata</taxon>
        <taxon>Craniata</taxon>
        <taxon>Vertebrata</taxon>
        <taxon>Euteleostomi</taxon>
        <taxon>Mammalia</taxon>
        <taxon>Eutheria</taxon>
        <taxon>Euarchontoglires</taxon>
        <taxon>Primates</taxon>
        <taxon>Haplorrhini</taxon>
        <taxon>Catarrhini</taxon>
        <taxon>Hominidae</taxon>
        <taxon>Homo</taxon>
    </lineage>
</organism>
<dbReference type="EMBL" id="HF547970">
    <property type="protein sequence ID" value="CCO13681.1"/>
    <property type="molecule type" value="Genomic_DNA"/>
</dbReference>
<dbReference type="EMBL" id="AC012488">
    <property type="status" value="NOT_ANNOTATED_CDS"/>
    <property type="molecule type" value="Genomic_DNA"/>
</dbReference>
<dbReference type="CCDS" id="CCDS86901.1">
    <molecule id="L0R819-1"/>
</dbReference>
<dbReference type="RefSeq" id="NP_001340422.1">
    <molecule id="L0R819-1"/>
    <property type="nucleotide sequence ID" value="NM_001353493.2"/>
</dbReference>
<dbReference type="SMR" id="L0R819"/>
<dbReference type="ComplexPortal" id="CPX-6145">
    <property type="entry name" value="PAQosome co-chaperone complex"/>
</dbReference>
<dbReference type="FunCoup" id="L0R819">
    <property type="interactions" value="39"/>
</dbReference>
<dbReference type="IntAct" id="L0R819">
    <property type="interactions" value="16"/>
</dbReference>
<dbReference type="STRING" id="9606.ENSP00000475224"/>
<dbReference type="BioMuta" id="HGNC:53619"/>
<dbReference type="jPOST" id="L0R819"/>
<dbReference type="MassIVE" id="L0R819"/>
<dbReference type="PeptideAtlas" id="L0R819"/>
<dbReference type="Pumba" id="L0R819"/>
<dbReference type="Ensembl" id="ENST00000607829.6">
    <molecule id="L0R819-1"/>
    <property type="protein sequence ID" value="ENSP00000475224.1"/>
    <property type="gene ID" value="ENSG00000286053.2"/>
</dbReference>
<dbReference type="GeneID" id="110599588"/>
<dbReference type="MANE-Select" id="ENST00000607829.6">
    <property type="protein sequence ID" value="ENSP00000475224.1"/>
    <property type="RefSeq nucleotide sequence ID" value="NM_001353493.2"/>
    <property type="RefSeq protein sequence ID" value="NP_001340422.1"/>
</dbReference>
<dbReference type="UCSC" id="uc061qov.1">
    <molecule id="L0R819-1"/>
    <property type="organism name" value="human"/>
</dbReference>
<dbReference type="AGR" id="HGNC:53619"/>
<dbReference type="GeneCards" id="ASDURF"/>
<dbReference type="HGNC" id="HGNC:53619">
    <property type="gene designation" value="ASDURF"/>
</dbReference>
<dbReference type="HPA" id="ENSG00000286053">
    <property type="expression patterns" value="Low tissue specificity"/>
</dbReference>
<dbReference type="MIM" id="619740">
    <property type="type" value="gene"/>
</dbReference>
<dbReference type="neXtProt" id="NX_L0R819"/>
<dbReference type="VEuPathDB" id="HostDB:ENSG00000286053"/>
<dbReference type="GeneTree" id="ENSGT01030000234770"/>
<dbReference type="HOGENOM" id="CLU_2359108_0_0_1"/>
<dbReference type="InParanoid" id="L0R819"/>
<dbReference type="OMA" id="TEMLSQC"/>
<dbReference type="OrthoDB" id="2442112at2759"/>
<dbReference type="PAN-GO" id="L0R819">
    <property type="GO annotations" value="0 GO annotations based on evolutionary models"/>
</dbReference>
<dbReference type="SignaLink" id="L0R819"/>
<dbReference type="SIGNOR" id="L0R819"/>
<dbReference type="Pharos" id="L0R819">
    <property type="development level" value="Tdark"/>
</dbReference>
<dbReference type="Proteomes" id="UP000005640">
    <property type="component" value="Chromosome 2"/>
</dbReference>
<dbReference type="Bgee" id="ENSG00000286053">
    <property type="expression patterns" value="Expressed in calcaneal tendon and 98 other cell types or tissues"/>
</dbReference>
<dbReference type="ExpressionAtlas" id="L0R819">
    <property type="expression patterns" value="baseline"/>
</dbReference>
<dbReference type="GO" id="GO:0005737">
    <property type="term" value="C:cytoplasm"/>
    <property type="evidence" value="ECO:0007669"/>
    <property type="project" value="UniProtKB-SubCell"/>
</dbReference>
<dbReference type="GO" id="GO:1990062">
    <property type="term" value="C:RPAP3/R2TP/prefoldin-like complex"/>
    <property type="evidence" value="ECO:0000353"/>
    <property type="project" value="ComplexPortal"/>
</dbReference>
<dbReference type="GO" id="GO:0050821">
    <property type="term" value="P:protein stabilization"/>
    <property type="evidence" value="ECO:0000303"/>
    <property type="project" value="ComplexPortal"/>
</dbReference>
<dbReference type="CDD" id="cd23166">
    <property type="entry name" value="ASDURF"/>
    <property type="match status" value="1"/>
</dbReference>
<dbReference type="Gene3D" id="1.10.287.370">
    <property type="match status" value="1"/>
</dbReference>
<dbReference type="InterPro" id="IPR054148">
    <property type="entry name" value="ASNSD1-SEP"/>
</dbReference>
<dbReference type="InterPro" id="IPR009053">
    <property type="entry name" value="Prefoldin"/>
</dbReference>
<dbReference type="Pfam" id="PF21975">
    <property type="entry name" value="ASNSD1-SEP"/>
    <property type="match status" value="1"/>
</dbReference>
<dbReference type="SUPFAM" id="SSF46579">
    <property type="entry name" value="Prefoldin"/>
    <property type="match status" value="1"/>
</dbReference>
<reference key="1">
    <citation type="journal article" date="2013" name="PLoS ONE">
        <title>Direct detection of alternative open reading frames translation products in human significantly expands the proteome.</title>
        <authorList>
            <person name="Vanderperre B."/>
            <person name="Lucier J.-F."/>
            <person name="Motard J."/>
            <person name="Tremblay G."/>
            <person name="Vanderperre S."/>
            <person name="Wisztorski M."/>
            <person name="Salzet M."/>
            <person name="Boisvert F.-M."/>
            <person name="Roucou X."/>
        </authorList>
    </citation>
    <scope>NUCLEOTIDE SEQUENCE [GENOMIC DNA]</scope>
    <scope>ALTERNATIVE INITIATION (ISOFORM 2)</scope>
</reference>
<reference key="2">
    <citation type="journal article" date="2005" name="Nature">
        <title>Generation and annotation of the DNA sequences of human chromosomes 2 and 4.</title>
        <authorList>
            <person name="Hillier L.W."/>
            <person name="Graves T.A."/>
            <person name="Fulton R.S."/>
            <person name="Fulton L.A."/>
            <person name="Pepin K.H."/>
            <person name="Minx P."/>
            <person name="Wagner-McPherson C."/>
            <person name="Layman D."/>
            <person name="Wylie K."/>
            <person name="Sekhon M."/>
            <person name="Becker M.C."/>
            <person name="Fewell G.A."/>
            <person name="Delehaunty K.D."/>
            <person name="Miner T.L."/>
            <person name="Nash W.E."/>
            <person name="Kremitzki C."/>
            <person name="Oddy L."/>
            <person name="Du H."/>
            <person name="Sun H."/>
            <person name="Bradshaw-Cordum H."/>
            <person name="Ali J."/>
            <person name="Carter J."/>
            <person name="Cordes M."/>
            <person name="Harris A."/>
            <person name="Isak A."/>
            <person name="van Brunt A."/>
            <person name="Nguyen C."/>
            <person name="Du F."/>
            <person name="Courtney L."/>
            <person name="Kalicki J."/>
            <person name="Ozersky P."/>
            <person name="Abbott S."/>
            <person name="Armstrong J."/>
            <person name="Belter E.A."/>
            <person name="Caruso L."/>
            <person name="Cedroni M."/>
            <person name="Cotton M."/>
            <person name="Davidson T."/>
            <person name="Desai A."/>
            <person name="Elliott G."/>
            <person name="Erb T."/>
            <person name="Fronick C."/>
            <person name="Gaige T."/>
            <person name="Haakenson W."/>
            <person name="Haglund K."/>
            <person name="Holmes A."/>
            <person name="Harkins R."/>
            <person name="Kim K."/>
            <person name="Kruchowski S.S."/>
            <person name="Strong C.M."/>
            <person name="Grewal N."/>
            <person name="Goyea E."/>
            <person name="Hou S."/>
            <person name="Levy A."/>
            <person name="Martinka S."/>
            <person name="Mead K."/>
            <person name="McLellan M.D."/>
            <person name="Meyer R."/>
            <person name="Randall-Maher J."/>
            <person name="Tomlinson C."/>
            <person name="Dauphin-Kohlberg S."/>
            <person name="Kozlowicz-Reilly A."/>
            <person name="Shah N."/>
            <person name="Swearengen-Shahid S."/>
            <person name="Snider J."/>
            <person name="Strong J.T."/>
            <person name="Thompson J."/>
            <person name="Yoakum M."/>
            <person name="Leonard S."/>
            <person name="Pearman C."/>
            <person name="Trani L."/>
            <person name="Radionenko M."/>
            <person name="Waligorski J.E."/>
            <person name="Wang C."/>
            <person name="Rock S.M."/>
            <person name="Tin-Wollam A.-M."/>
            <person name="Maupin R."/>
            <person name="Latreille P."/>
            <person name="Wendl M.C."/>
            <person name="Yang S.-P."/>
            <person name="Pohl C."/>
            <person name="Wallis J.W."/>
            <person name="Spieth J."/>
            <person name="Bieri T.A."/>
            <person name="Berkowicz N."/>
            <person name="Nelson J.O."/>
            <person name="Osborne J."/>
            <person name="Ding L."/>
            <person name="Meyer R."/>
            <person name="Sabo A."/>
            <person name="Shotland Y."/>
            <person name="Sinha P."/>
            <person name="Wohldmann P.E."/>
            <person name="Cook L.L."/>
            <person name="Hickenbotham M.T."/>
            <person name="Eldred J."/>
            <person name="Williams D."/>
            <person name="Jones T.A."/>
            <person name="She X."/>
            <person name="Ciccarelli F.D."/>
            <person name="Izaurralde E."/>
            <person name="Taylor J."/>
            <person name="Schmutz J."/>
            <person name="Myers R.M."/>
            <person name="Cox D.R."/>
            <person name="Huang X."/>
            <person name="McPherson J.D."/>
            <person name="Mardis E.R."/>
            <person name="Clifton S.W."/>
            <person name="Warren W.C."/>
            <person name="Chinwalla A.T."/>
            <person name="Eddy S.R."/>
            <person name="Marra M.A."/>
            <person name="Ovcharenko I."/>
            <person name="Furey T.S."/>
            <person name="Miller W."/>
            <person name="Eichler E.E."/>
            <person name="Bork P."/>
            <person name="Suyama M."/>
            <person name="Torrents D."/>
            <person name="Waterston R.H."/>
            <person name="Wilson R.K."/>
        </authorList>
    </citation>
    <scope>NUCLEOTIDE SEQUENCE [LARGE SCALE GENOMIC DNA]</scope>
</reference>
<reference key="3">
    <citation type="journal article" date="2013" name="Nat. Chem. Biol.">
        <title>Peptidomic discovery of short open reading frame-encoded peptides in human cells.</title>
        <authorList>
            <person name="Slavoff S.A."/>
            <person name="Mitchell A.J."/>
            <person name="Schwaid A.G."/>
            <person name="Cabili M.N."/>
            <person name="Ma J."/>
            <person name="Levin J.Z."/>
            <person name="Karger A.D."/>
            <person name="Budnik B.A."/>
            <person name="Rinn J.L."/>
            <person name="Saghatelian A."/>
        </authorList>
    </citation>
    <scope>ALTERNATIVE INITIATION (ISOFORM 2)</scope>
    <scope>SUBCELLULAR LOCATION (ISOFORM 2)</scope>
    <scope>IDENTIFICATION BY MASS SPECTROMETRY (ISOFORM 2)</scope>
</reference>
<reference key="4">
    <citation type="journal article" date="2015" name="Crit. Rev. Biochem. Mol. Biol.">
        <title>Identification and characterization of sORF-encoded polypeptides.</title>
        <authorList>
            <person name="Chu Q."/>
            <person name="Ma J."/>
            <person name="Saghatelian A."/>
        </authorList>
    </citation>
    <scope>ALTERNATIVE INITIATION (ISOFORM 2)</scope>
</reference>
<reference key="5">
    <citation type="journal article" date="2020" name="J. Proteome Res.">
        <title>Upstream ORF-Encoded ASDURF Is a Novel Prefoldin-like Subunit of the PAQosome.</title>
        <authorList>
            <person name="Cloutier P."/>
            <person name="Poitras C."/>
            <person name="Faubert D."/>
            <person name="Bouchard A."/>
            <person name="Blanchette M."/>
            <person name="Gauthier M.S."/>
            <person name="Coulombe B."/>
        </authorList>
    </citation>
    <scope>IDENTIFICATION IN THE PAQOSOME COMPLEX</scope>
    <scope>IDENTIFICATION BY MASS SPECTROMETRY</scope>
</reference>
<protein>
    <recommendedName>
        <fullName evidence="9">ASNSD1 upstream open reading frame protein</fullName>
    </recommendedName>
    <alternativeName>
        <fullName evidence="5 7">ASNSD1 small/short open reading frame-encoded polypeptide</fullName>
        <shortName evidence="5 7">ASNSD1-SEP</shortName>
    </alternativeName>
</protein>
<feature type="chain" id="PRO_0000442240" description="ASNSD1 upstream open reading frame protein">
    <location>
        <begin position="1"/>
        <end position="96"/>
    </location>
</feature>
<feature type="region of interest" description="Disordered" evidence="2">
    <location>
        <begin position="1"/>
        <end position="28"/>
    </location>
</feature>
<feature type="coiled-coil region" evidence="1">
    <location>
        <begin position="23"/>
        <end position="96"/>
    </location>
</feature>
<feature type="compositionally biased region" description="Basic and acidic residues" evidence="2">
    <location>
        <begin position="1"/>
        <end position="10"/>
    </location>
</feature>
<gene>
    <name evidence="9" type="primary">ASDURF</name>
</gene>